<gene>
    <name type="primary">SIFV0066</name>
</gene>
<accession>Q914G6</accession>
<protein>
    <recommendedName>
        <fullName>Uncharacterized protein 66</fullName>
    </recommendedName>
</protein>
<proteinExistence type="predicted"/>
<organismHost>
    <name type="scientific">Saccharolobus islandicus</name>
    <name type="common">Sulfolobus islandicus</name>
    <dbReference type="NCBI Taxonomy" id="43080"/>
</organismHost>
<feature type="chain" id="PRO_0000385432" description="Uncharacterized protein 66">
    <location>
        <begin position="1"/>
        <end position="236"/>
    </location>
</feature>
<organism>
    <name type="scientific">Sulfolobus islandicus filamentous virus (isolate Iceland/Hveragerdi)</name>
    <name type="common">SIFV</name>
    <dbReference type="NCBI Taxonomy" id="654908"/>
    <lineage>
        <taxon>Viruses</taxon>
        <taxon>Adnaviria</taxon>
        <taxon>Zilligvirae</taxon>
        <taxon>Taleaviricota</taxon>
        <taxon>Tokiviricetes</taxon>
        <taxon>Ligamenvirales</taxon>
        <taxon>Lipothrixviridae</taxon>
        <taxon>Betalipothrixvirus</taxon>
        <taxon>Sulfolobus islandicus filamentous virus</taxon>
    </lineage>
</organism>
<name>Y066_SIFVH</name>
<reference key="1">
    <citation type="journal article" date="2000" name="Virology">
        <title>A novel lipothrixvirus, SIFV, of the extremely thermophilic crenarchaeon Sulfolobus.</title>
        <authorList>
            <person name="Arnold H.P."/>
            <person name="Zillig W."/>
            <person name="Ziese U."/>
            <person name="Holz I."/>
            <person name="Crosby M."/>
            <person name="Utterback T."/>
            <person name="Weidmann J.F."/>
            <person name="Umayam L.A."/>
            <person name="Teffera K."/>
            <person name="Kristjanson J.K."/>
            <person name="Klenk H.P."/>
            <person name="Nelson K.E."/>
            <person name="Fraser C.M."/>
        </authorList>
    </citation>
    <scope>NUCLEOTIDE SEQUENCE [GENOMIC DNA]</scope>
</reference>
<keyword id="KW-1185">Reference proteome</keyword>
<sequence length="236" mass="26684">MRKLRADVSKVKVLSEIPSGAKLLWESNELALYYTYNATQGEVDWILVNRTSDKKYVSLLRGAELIYNNNVVTVPSYVFGNAFADVYFANGLSNYINDLNNIPLYSLAVLRDSSGKNIVGFVFSLPPNSMIEVPEYGFVNLQKIWGQLLEVYPGNLNLYVIIYDYNEIIEYEQESGVNVQSPPDPYAVFSYQFSISELGAIMTPRVIIEIPQSDVNFANTLIADFKKFVSSIKHML</sequence>
<dbReference type="EMBL" id="AF440571">
    <property type="protein sequence ID" value="AAL27775.1"/>
    <property type="molecule type" value="Genomic_DNA"/>
</dbReference>
<dbReference type="RefSeq" id="NP_445729.1">
    <property type="nucleotide sequence ID" value="NC_003214.2"/>
</dbReference>
<dbReference type="GeneID" id="922321"/>
<dbReference type="KEGG" id="vg:922321"/>
<dbReference type="Proteomes" id="UP000007017">
    <property type="component" value="Segment"/>
</dbReference>